<organism>
    <name type="scientific">Bacillus cereus (strain Q1)</name>
    <dbReference type="NCBI Taxonomy" id="361100"/>
    <lineage>
        <taxon>Bacteria</taxon>
        <taxon>Bacillati</taxon>
        <taxon>Bacillota</taxon>
        <taxon>Bacilli</taxon>
        <taxon>Bacillales</taxon>
        <taxon>Bacillaceae</taxon>
        <taxon>Bacillus</taxon>
        <taxon>Bacillus cereus group</taxon>
    </lineage>
</organism>
<dbReference type="EMBL" id="CP000227">
    <property type="protein sequence ID" value="ACM14825.1"/>
    <property type="molecule type" value="Genomic_DNA"/>
</dbReference>
<dbReference type="KEGG" id="bcq:BCQ_4399"/>
<dbReference type="HOGENOM" id="CLU_125889_1_0_9"/>
<dbReference type="Proteomes" id="UP000000441">
    <property type="component" value="Chromosome"/>
</dbReference>
<dbReference type="GO" id="GO:0005886">
    <property type="term" value="C:plasma membrane"/>
    <property type="evidence" value="ECO:0007669"/>
    <property type="project" value="UniProtKB-SubCell"/>
</dbReference>
<dbReference type="HAMAP" id="MF_01874">
    <property type="entry name" value="UPF0756"/>
    <property type="match status" value="1"/>
</dbReference>
<dbReference type="InterPro" id="IPR007382">
    <property type="entry name" value="UPF0756_TM"/>
</dbReference>
<dbReference type="PANTHER" id="PTHR38452">
    <property type="entry name" value="UPF0756 MEMBRANE PROTEIN YEAL"/>
    <property type="match status" value="1"/>
</dbReference>
<dbReference type="PANTHER" id="PTHR38452:SF1">
    <property type="entry name" value="UPF0756 MEMBRANE PROTEIN YEAL"/>
    <property type="match status" value="1"/>
</dbReference>
<dbReference type="Pfam" id="PF04284">
    <property type="entry name" value="DUF441"/>
    <property type="match status" value="1"/>
</dbReference>
<reference key="1">
    <citation type="journal article" date="2009" name="J. Bacteriol.">
        <title>Complete genome sequence of the extremophilic Bacillus cereus strain Q1 with industrial applications.</title>
        <authorList>
            <person name="Xiong Z."/>
            <person name="Jiang Y."/>
            <person name="Qi D."/>
            <person name="Lu H."/>
            <person name="Yang F."/>
            <person name="Yang J."/>
            <person name="Chen L."/>
            <person name="Sun L."/>
            <person name="Xu X."/>
            <person name="Xue Y."/>
            <person name="Zhu Y."/>
            <person name="Jin Q."/>
        </authorList>
    </citation>
    <scope>NUCLEOTIDE SEQUENCE [LARGE SCALE GENOMIC DNA]</scope>
    <source>
        <strain>Q1</strain>
    </source>
</reference>
<sequence length="153" mass="16014">MISQSTLFLFILLIIGLIAKNQSLTVAIGVLFLLKFTFLGDKVFPYLQTKGINLGVTVITIAVLVPIATGEIGFKQLGEAAKSYYAWIALASGVAVALLAKGGVQLLTTDPHITTALVFGTIIAVALFNGVAVGPLIGSGIAYAVMSIIQMFK</sequence>
<gene>
    <name type="ordered locus">BCQ_4399</name>
</gene>
<keyword id="KW-1003">Cell membrane</keyword>
<keyword id="KW-0472">Membrane</keyword>
<keyword id="KW-0812">Transmembrane</keyword>
<keyword id="KW-1133">Transmembrane helix</keyword>
<accession>B9J095</accession>
<evidence type="ECO:0000255" key="1">
    <source>
        <dbReference type="HAMAP-Rule" id="MF_01874"/>
    </source>
</evidence>
<feature type="chain" id="PRO_0000388828" description="UPF0756 membrane protein BCQ_4399">
    <location>
        <begin position="1"/>
        <end position="153"/>
    </location>
</feature>
<feature type="transmembrane region" description="Helical" evidence="1">
    <location>
        <begin position="8"/>
        <end position="28"/>
    </location>
</feature>
<feature type="transmembrane region" description="Helical" evidence="1">
    <location>
        <begin position="54"/>
        <end position="74"/>
    </location>
</feature>
<feature type="transmembrane region" description="Helical" evidence="1">
    <location>
        <begin position="87"/>
        <end position="107"/>
    </location>
</feature>
<feature type="transmembrane region" description="Helical" evidence="1">
    <location>
        <begin position="117"/>
        <end position="137"/>
    </location>
</feature>
<proteinExistence type="inferred from homology"/>
<name>Y4399_BACCQ</name>
<comment type="subcellular location">
    <subcellularLocation>
        <location evidence="1">Cell membrane</location>
        <topology evidence="1">Multi-pass membrane protein</topology>
    </subcellularLocation>
</comment>
<comment type="similarity">
    <text evidence="1">Belongs to the UPF0756 family.</text>
</comment>
<protein>
    <recommendedName>
        <fullName evidence="1">UPF0756 membrane protein BCQ_4399</fullName>
    </recommendedName>
</protein>